<feature type="chain" id="PRO_0000077240" description="Large ribosomal subunit protein uL3y">
    <location>
        <begin position="1"/>
        <end position="390"/>
    </location>
</feature>
<feature type="region of interest" description="Disordered" evidence="1">
    <location>
        <begin position="1"/>
        <end position="36"/>
    </location>
</feature>
<feature type="compositionally biased region" description="Basic residues" evidence="1">
    <location>
        <begin position="18"/>
        <end position="31"/>
    </location>
</feature>
<feature type="sequence conflict" description="In Ref. 1; AAA66161." evidence="3" ref="1">
    <original>L</original>
    <variation>V</variation>
    <location>
        <position position="174"/>
    </location>
</feature>
<dbReference type="EMBL" id="M32655">
    <property type="protein sequence ID" value="AAA66161.1"/>
    <property type="molecule type" value="Genomic_DNA"/>
</dbReference>
<dbReference type="EMBL" id="AC005850">
    <property type="protein sequence ID" value="AAD25547.1"/>
    <property type="molecule type" value="Genomic_DNA"/>
</dbReference>
<dbReference type="EMBL" id="CP002684">
    <property type="protein sequence ID" value="AEE33859.1"/>
    <property type="molecule type" value="Genomic_DNA"/>
</dbReference>
<dbReference type="EMBL" id="BT003869">
    <property type="protein sequence ID" value="AAO41918.1"/>
    <property type="molecule type" value="mRNA"/>
</dbReference>
<dbReference type="EMBL" id="BT005702">
    <property type="protein sequence ID" value="AAO64122.1"/>
    <property type="molecule type" value="mRNA"/>
</dbReference>
<dbReference type="PIR" id="B96641">
    <property type="entry name" value="B96641"/>
</dbReference>
<dbReference type="PIR" id="JQ0772">
    <property type="entry name" value="JQ0772"/>
</dbReference>
<dbReference type="RefSeq" id="NP_176352.1">
    <property type="nucleotide sequence ID" value="NM_104840.5"/>
</dbReference>
<dbReference type="SMR" id="P22738"/>
<dbReference type="BioGRID" id="27677">
    <property type="interactions" value="170"/>
</dbReference>
<dbReference type="FunCoup" id="P22738">
    <property type="interactions" value="2194"/>
</dbReference>
<dbReference type="IntAct" id="P22738">
    <property type="interactions" value="1"/>
</dbReference>
<dbReference type="STRING" id="3702.P22738"/>
<dbReference type="iPTMnet" id="P22738"/>
<dbReference type="PaxDb" id="3702-AT1G61580.1"/>
<dbReference type="ProteomicsDB" id="236463"/>
<dbReference type="EnsemblPlants" id="AT1G61580.1">
    <property type="protein sequence ID" value="AT1G61580.1"/>
    <property type="gene ID" value="AT1G61580"/>
</dbReference>
<dbReference type="GeneID" id="842454"/>
<dbReference type="Gramene" id="AT1G61580.1">
    <property type="protein sequence ID" value="AT1G61580.1"/>
    <property type="gene ID" value="AT1G61580"/>
</dbReference>
<dbReference type="KEGG" id="ath:AT1G61580"/>
<dbReference type="Araport" id="AT1G61580"/>
<dbReference type="TAIR" id="AT1G61580">
    <property type="gene designation" value="RPL3B"/>
</dbReference>
<dbReference type="eggNOG" id="KOG0746">
    <property type="taxonomic scope" value="Eukaryota"/>
</dbReference>
<dbReference type="HOGENOM" id="CLU_033361_2_1_1"/>
<dbReference type="InParanoid" id="P22738"/>
<dbReference type="OMA" id="VDWARVK"/>
<dbReference type="PhylomeDB" id="P22738"/>
<dbReference type="CD-CODE" id="4299E36E">
    <property type="entry name" value="Nucleolus"/>
</dbReference>
<dbReference type="PRO" id="PR:P22738"/>
<dbReference type="Proteomes" id="UP000006548">
    <property type="component" value="Chromosome 1"/>
</dbReference>
<dbReference type="ExpressionAtlas" id="P22738">
    <property type="expression patterns" value="baseline and differential"/>
</dbReference>
<dbReference type="GO" id="GO:0022625">
    <property type="term" value="C:cytosolic large ribosomal subunit"/>
    <property type="evidence" value="ECO:0007005"/>
    <property type="project" value="TAIR"/>
</dbReference>
<dbReference type="GO" id="GO:0005634">
    <property type="term" value="C:nucleus"/>
    <property type="evidence" value="ECO:0007005"/>
    <property type="project" value="TAIR"/>
</dbReference>
<dbReference type="GO" id="GO:0003735">
    <property type="term" value="F:structural constituent of ribosome"/>
    <property type="evidence" value="ECO:0000314"/>
    <property type="project" value="CAFA"/>
</dbReference>
<dbReference type="GO" id="GO:0006412">
    <property type="term" value="P:translation"/>
    <property type="evidence" value="ECO:0007669"/>
    <property type="project" value="InterPro"/>
</dbReference>
<dbReference type="FunFam" id="2.40.30.10:FF:000079">
    <property type="entry name" value="60S ribosomal protein L3"/>
    <property type="match status" value="1"/>
</dbReference>
<dbReference type="FunFam" id="3.30.1430.10:FF:000001">
    <property type="entry name" value="60S ribosomal protein L3"/>
    <property type="match status" value="1"/>
</dbReference>
<dbReference type="FunFam" id="4.10.960.10:FF:000001">
    <property type="entry name" value="60S ribosomal protein L3"/>
    <property type="match status" value="1"/>
</dbReference>
<dbReference type="FunFam" id="4.10.960.10:FF:000002">
    <property type="entry name" value="60S ribosomal protein L3"/>
    <property type="match status" value="1"/>
</dbReference>
<dbReference type="FunFam" id="2.40.30.10:FF:000351">
    <property type="entry name" value="Ribosomal protein L3"/>
    <property type="match status" value="1"/>
</dbReference>
<dbReference type="Gene3D" id="3.30.1430.10">
    <property type="match status" value="1"/>
</dbReference>
<dbReference type="Gene3D" id="4.10.960.10">
    <property type="entry name" value="Ribosomal protein L3, domain 3"/>
    <property type="match status" value="1"/>
</dbReference>
<dbReference type="Gene3D" id="2.40.30.10">
    <property type="entry name" value="Translation factors"/>
    <property type="match status" value="1"/>
</dbReference>
<dbReference type="InterPro" id="IPR045077">
    <property type="entry name" value="L3_arc_euk"/>
</dbReference>
<dbReference type="InterPro" id="IPR044892">
    <property type="entry name" value="Ribosomal_L3_dom_3_arc_sf"/>
</dbReference>
<dbReference type="InterPro" id="IPR000597">
    <property type="entry name" value="Ribosomal_uL3"/>
</dbReference>
<dbReference type="InterPro" id="IPR019926">
    <property type="entry name" value="Ribosomal_uL3_CS"/>
</dbReference>
<dbReference type="InterPro" id="IPR009000">
    <property type="entry name" value="Transl_B-barrel_sf"/>
</dbReference>
<dbReference type="PANTHER" id="PTHR11363">
    <property type="entry name" value="60S RIBOSOMAL PROTEIN L3-RELATED"/>
    <property type="match status" value="1"/>
</dbReference>
<dbReference type="PANTHER" id="PTHR11363:SF14">
    <property type="entry name" value="LARGE RIBOSOMAL SUBUNIT PROTEIN UL3Y"/>
    <property type="match status" value="1"/>
</dbReference>
<dbReference type="Pfam" id="PF00297">
    <property type="entry name" value="Ribosomal_L3"/>
    <property type="match status" value="1"/>
</dbReference>
<dbReference type="SUPFAM" id="SSF50447">
    <property type="entry name" value="Translation proteins"/>
    <property type="match status" value="1"/>
</dbReference>
<dbReference type="PROSITE" id="PS00474">
    <property type="entry name" value="RIBOSOMAL_L3"/>
    <property type="match status" value="1"/>
</dbReference>
<accession>P22738</accession>
<accession>Q9SY92</accession>
<proteinExistence type="evidence at transcript level"/>
<evidence type="ECO:0000256" key="1">
    <source>
        <dbReference type="SAM" id="MobiDB-lite"/>
    </source>
</evidence>
<evidence type="ECO:0000303" key="2">
    <source>
    </source>
</evidence>
<evidence type="ECO:0000305" key="3"/>
<comment type="subcellular location">
    <subcellularLocation>
        <location>Cytoplasm</location>
    </subcellularLocation>
</comment>
<comment type="similarity">
    <text evidence="3">Belongs to the universal ribosomal protein uL3 family.</text>
</comment>
<keyword id="KW-0963">Cytoplasm</keyword>
<keyword id="KW-1185">Reference proteome</keyword>
<keyword id="KW-0687">Ribonucleoprotein</keyword>
<keyword id="KW-0689">Ribosomal protein</keyword>
<gene>
    <name type="primary">ARP2</name>
    <name type="synonym">RPL3B</name>
    <name type="ordered locus">At1g61580</name>
    <name type="ORF">T25B24.7</name>
</gene>
<name>RL32_ARATH</name>
<protein>
    <recommendedName>
        <fullName evidence="2">Large ribosomal subunit protein uL3y</fullName>
    </recommendedName>
    <alternativeName>
        <fullName>60S ribosomal protein L3-2</fullName>
    </alternativeName>
</protein>
<organism>
    <name type="scientific">Arabidopsis thaliana</name>
    <name type="common">Mouse-ear cress</name>
    <dbReference type="NCBI Taxonomy" id="3702"/>
    <lineage>
        <taxon>Eukaryota</taxon>
        <taxon>Viridiplantae</taxon>
        <taxon>Streptophyta</taxon>
        <taxon>Embryophyta</taxon>
        <taxon>Tracheophyta</taxon>
        <taxon>Spermatophyta</taxon>
        <taxon>Magnoliopsida</taxon>
        <taxon>eudicotyledons</taxon>
        <taxon>Gunneridae</taxon>
        <taxon>Pentapetalae</taxon>
        <taxon>rosids</taxon>
        <taxon>malvids</taxon>
        <taxon>Brassicales</taxon>
        <taxon>Brassicaceae</taxon>
        <taxon>Camelineae</taxon>
        <taxon>Arabidopsis</taxon>
    </lineage>
</organism>
<sequence>MSHRKFEHPRHGSLGFLPRKRASRHRGKVKAFPKDDPTKPCRLTSFLGYKAGMTHIVRDVEKPGSKLHKKETCEAVTIIETPPMVVVGVVGYVKTPRGLRSLCTVWAQHLSEELRRRFYKNWAKSKKKAFTRYSKKHETEEGKKDIQSQLEKMKKYCSVIRVLAHTQIRKMKGLKQKKAHLNEIQINGGDIAKKVDYACSLFEKQVPVDAIFQKDEMIDIIGVTKGKGYEGVVTRWGVTRLPRKTHRGLRKVACIGAWHPARVSYTVARAGQNGYHHRTEMNKKVYRVGKVGQETHSAMTEYDRTEKDITPMGGFPHYGIVKEDYLMIKGCCVGPKKRVVTLRQTLLKQTSRLAMEEIKLKFIDAASNGGHGRFQTSQEKAKFYGRTIKA</sequence>
<reference key="1">
    <citation type="journal article" date="1990" name="Gene">
        <title>Two evolutionarily divergent genes encode a cytoplasmic ribosomal protein of Arabidopsis thaliana.</title>
        <authorList>
            <person name="Kim Y."/>
            <person name="Zhang H."/>
            <person name="Scholl R.L."/>
        </authorList>
    </citation>
    <scope>NUCLEOTIDE SEQUENCE [GENOMIC DNA]</scope>
</reference>
<reference key="2">
    <citation type="journal article" date="2000" name="Nature">
        <title>Sequence and analysis of chromosome 1 of the plant Arabidopsis thaliana.</title>
        <authorList>
            <person name="Theologis A."/>
            <person name="Ecker J.R."/>
            <person name="Palm C.J."/>
            <person name="Federspiel N.A."/>
            <person name="Kaul S."/>
            <person name="White O."/>
            <person name="Alonso J."/>
            <person name="Altafi H."/>
            <person name="Araujo R."/>
            <person name="Bowman C.L."/>
            <person name="Brooks S.Y."/>
            <person name="Buehler E."/>
            <person name="Chan A."/>
            <person name="Chao Q."/>
            <person name="Chen H."/>
            <person name="Cheuk R.F."/>
            <person name="Chin C.W."/>
            <person name="Chung M.K."/>
            <person name="Conn L."/>
            <person name="Conway A.B."/>
            <person name="Conway A.R."/>
            <person name="Creasy T.H."/>
            <person name="Dewar K."/>
            <person name="Dunn P."/>
            <person name="Etgu P."/>
            <person name="Feldblyum T.V."/>
            <person name="Feng J.-D."/>
            <person name="Fong B."/>
            <person name="Fujii C.Y."/>
            <person name="Gill J.E."/>
            <person name="Goldsmith A.D."/>
            <person name="Haas B."/>
            <person name="Hansen N.F."/>
            <person name="Hughes B."/>
            <person name="Huizar L."/>
            <person name="Hunter J.L."/>
            <person name="Jenkins J."/>
            <person name="Johnson-Hopson C."/>
            <person name="Khan S."/>
            <person name="Khaykin E."/>
            <person name="Kim C.J."/>
            <person name="Koo H.L."/>
            <person name="Kremenetskaia I."/>
            <person name="Kurtz D.B."/>
            <person name="Kwan A."/>
            <person name="Lam B."/>
            <person name="Langin-Hooper S."/>
            <person name="Lee A."/>
            <person name="Lee J.M."/>
            <person name="Lenz C.A."/>
            <person name="Li J.H."/>
            <person name="Li Y.-P."/>
            <person name="Lin X."/>
            <person name="Liu S.X."/>
            <person name="Liu Z.A."/>
            <person name="Luros J.S."/>
            <person name="Maiti R."/>
            <person name="Marziali A."/>
            <person name="Militscher J."/>
            <person name="Miranda M."/>
            <person name="Nguyen M."/>
            <person name="Nierman W.C."/>
            <person name="Osborne B.I."/>
            <person name="Pai G."/>
            <person name="Peterson J."/>
            <person name="Pham P.K."/>
            <person name="Rizzo M."/>
            <person name="Rooney T."/>
            <person name="Rowley D."/>
            <person name="Sakano H."/>
            <person name="Salzberg S.L."/>
            <person name="Schwartz J.R."/>
            <person name="Shinn P."/>
            <person name="Southwick A.M."/>
            <person name="Sun H."/>
            <person name="Tallon L.J."/>
            <person name="Tambunga G."/>
            <person name="Toriumi M.J."/>
            <person name="Town C.D."/>
            <person name="Utterback T."/>
            <person name="Van Aken S."/>
            <person name="Vaysberg M."/>
            <person name="Vysotskaia V.S."/>
            <person name="Walker M."/>
            <person name="Wu D."/>
            <person name="Yu G."/>
            <person name="Fraser C.M."/>
            <person name="Venter J.C."/>
            <person name="Davis R.W."/>
        </authorList>
    </citation>
    <scope>NUCLEOTIDE SEQUENCE [LARGE SCALE GENOMIC DNA]</scope>
    <source>
        <strain>cv. Columbia</strain>
    </source>
</reference>
<reference key="3">
    <citation type="journal article" date="2017" name="Plant J.">
        <title>Araport11: a complete reannotation of the Arabidopsis thaliana reference genome.</title>
        <authorList>
            <person name="Cheng C.Y."/>
            <person name="Krishnakumar V."/>
            <person name="Chan A.P."/>
            <person name="Thibaud-Nissen F."/>
            <person name="Schobel S."/>
            <person name="Town C.D."/>
        </authorList>
    </citation>
    <scope>GENOME REANNOTATION</scope>
    <source>
        <strain>cv. Columbia</strain>
    </source>
</reference>
<reference key="4">
    <citation type="journal article" date="2003" name="Science">
        <title>Empirical analysis of transcriptional activity in the Arabidopsis genome.</title>
        <authorList>
            <person name="Yamada K."/>
            <person name="Lim J."/>
            <person name="Dale J.M."/>
            <person name="Chen H."/>
            <person name="Shinn P."/>
            <person name="Palm C.J."/>
            <person name="Southwick A.M."/>
            <person name="Wu H.C."/>
            <person name="Kim C.J."/>
            <person name="Nguyen M."/>
            <person name="Pham P.K."/>
            <person name="Cheuk R.F."/>
            <person name="Karlin-Newmann G."/>
            <person name="Liu S.X."/>
            <person name="Lam B."/>
            <person name="Sakano H."/>
            <person name="Wu T."/>
            <person name="Yu G."/>
            <person name="Miranda M."/>
            <person name="Quach H.L."/>
            <person name="Tripp M."/>
            <person name="Chang C.H."/>
            <person name="Lee J.M."/>
            <person name="Toriumi M.J."/>
            <person name="Chan M.M."/>
            <person name="Tang C.C."/>
            <person name="Onodera C.S."/>
            <person name="Deng J.M."/>
            <person name="Akiyama K."/>
            <person name="Ansari Y."/>
            <person name="Arakawa T."/>
            <person name="Banh J."/>
            <person name="Banno F."/>
            <person name="Bowser L."/>
            <person name="Brooks S.Y."/>
            <person name="Carninci P."/>
            <person name="Chao Q."/>
            <person name="Choy N."/>
            <person name="Enju A."/>
            <person name="Goldsmith A.D."/>
            <person name="Gurjal M."/>
            <person name="Hansen N.F."/>
            <person name="Hayashizaki Y."/>
            <person name="Johnson-Hopson C."/>
            <person name="Hsuan V.W."/>
            <person name="Iida K."/>
            <person name="Karnes M."/>
            <person name="Khan S."/>
            <person name="Koesema E."/>
            <person name="Ishida J."/>
            <person name="Jiang P.X."/>
            <person name="Jones T."/>
            <person name="Kawai J."/>
            <person name="Kamiya A."/>
            <person name="Meyers C."/>
            <person name="Nakajima M."/>
            <person name="Narusaka M."/>
            <person name="Seki M."/>
            <person name="Sakurai T."/>
            <person name="Satou M."/>
            <person name="Tamse R."/>
            <person name="Vaysberg M."/>
            <person name="Wallender E.K."/>
            <person name="Wong C."/>
            <person name="Yamamura Y."/>
            <person name="Yuan S."/>
            <person name="Shinozaki K."/>
            <person name="Davis R.W."/>
            <person name="Theologis A."/>
            <person name="Ecker J.R."/>
        </authorList>
    </citation>
    <scope>NUCLEOTIDE SEQUENCE [LARGE SCALE MRNA]</scope>
    <source>
        <strain>cv. Columbia</strain>
    </source>
</reference>
<reference key="5">
    <citation type="journal article" date="2001" name="Plant Physiol.">
        <title>The organization of cytoplasmic ribosomal protein genes in the Arabidopsis genome.</title>
        <authorList>
            <person name="Barakat A."/>
            <person name="Szick-Miranda K."/>
            <person name="Chang I.-F."/>
            <person name="Guyot R."/>
            <person name="Blanc G."/>
            <person name="Cooke R."/>
            <person name="Delseny M."/>
            <person name="Bailey-Serres J."/>
        </authorList>
    </citation>
    <scope>GENE FAMILY ORGANIZATION</scope>
    <scope>NOMENCLATURE</scope>
</reference>
<reference key="6">
    <citation type="journal article" date="2023" name="Plant Cell">
        <title>An updated nomenclature for plant ribosomal protein genes.</title>
        <authorList>
            <person name="Scarpin M.R."/>
            <person name="Busche M."/>
            <person name="Martinez R.E."/>
            <person name="Harper L.C."/>
            <person name="Reiser L."/>
            <person name="Szakonyi D."/>
            <person name="Merchante C."/>
            <person name="Lan T."/>
            <person name="Xiong W."/>
            <person name="Mo B."/>
            <person name="Tang G."/>
            <person name="Chen X."/>
            <person name="Bailey-Serres J."/>
            <person name="Browning K.S."/>
            <person name="Brunkard J.O."/>
        </authorList>
    </citation>
    <scope>NOMENCLATURE</scope>
</reference>